<feature type="chain" id="PRO_1000058503" description="4-hydroxy-3-methylbut-2-enyl diphosphate reductase">
    <location>
        <begin position="1"/>
        <end position="314"/>
    </location>
</feature>
<feature type="active site" description="Proton donor" evidence="1">
    <location>
        <position position="133"/>
    </location>
</feature>
<feature type="binding site" evidence="1">
    <location>
        <position position="12"/>
    </location>
    <ligand>
        <name>[4Fe-4S] cluster</name>
        <dbReference type="ChEBI" id="CHEBI:49883"/>
    </ligand>
</feature>
<feature type="binding site" evidence="1">
    <location>
        <position position="43"/>
    </location>
    <ligand>
        <name>(2E)-4-hydroxy-3-methylbut-2-enyl diphosphate</name>
        <dbReference type="ChEBI" id="CHEBI:128753"/>
    </ligand>
</feature>
<feature type="binding site" evidence="1">
    <location>
        <position position="43"/>
    </location>
    <ligand>
        <name>dimethylallyl diphosphate</name>
        <dbReference type="ChEBI" id="CHEBI:57623"/>
    </ligand>
</feature>
<feature type="binding site" evidence="1">
    <location>
        <position position="43"/>
    </location>
    <ligand>
        <name>isopentenyl diphosphate</name>
        <dbReference type="ChEBI" id="CHEBI:128769"/>
    </ligand>
</feature>
<feature type="binding site" evidence="1">
    <location>
        <position position="81"/>
    </location>
    <ligand>
        <name>(2E)-4-hydroxy-3-methylbut-2-enyl diphosphate</name>
        <dbReference type="ChEBI" id="CHEBI:128753"/>
    </ligand>
</feature>
<feature type="binding site" evidence="1">
    <location>
        <position position="81"/>
    </location>
    <ligand>
        <name>dimethylallyl diphosphate</name>
        <dbReference type="ChEBI" id="CHEBI:57623"/>
    </ligand>
</feature>
<feature type="binding site" evidence="1">
    <location>
        <position position="81"/>
    </location>
    <ligand>
        <name>isopentenyl diphosphate</name>
        <dbReference type="ChEBI" id="CHEBI:128769"/>
    </ligand>
</feature>
<feature type="binding site" evidence="1">
    <location>
        <position position="103"/>
    </location>
    <ligand>
        <name>[4Fe-4S] cluster</name>
        <dbReference type="ChEBI" id="CHEBI:49883"/>
    </ligand>
</feature>
<feature type="binding site" evidence="1">
    <location>
        <position position="131"/>
    </location>
    <ligand>
        <name>(2E)-4-hydroxy-3-methylbut-2-enyl diphosphate</name>
        <dbReference type="ChEBI" id="CHEBI:128753"/>
    </ligand>
</feature>
<feature type="binding site" evidence="1">
    <location>
        <position position="131"/>
    </location>
    <ligand>
        <name>dimethylallyl diphosphate</name>
        <dbReference type="ChEBI" id="CHEBI:57623"/>
    </ligand>
</feature>
<feature type="binding site" evidence="1">
    <location>
        <position position="131"/>
    </location>
    <ligand>
        <name>isopentenyl diphosphate</name>
        <dbReference type="ChEBI" id="CHEBI:128769"/>
    </ligand>
</feature>
<feature type="binding site" evidence="1">
    <location>
        <position position="170"/>
    </location>
    <ligand>
        <name>(2E)-4-hydroxy-3-methylbut-2-enyl diphosphate</name>
        <dbReference type="ChEBI" id="CHEBI:128753"/>
    </ligand>
</feature>
<feature type="binding site" evidence="1">
    <location>
        <position position="198"/>
    </location>
    <ligand>
        <name>[4Fe-4S] cluster</name>
        <dbReference type="ChEBI" id="CHEBI:49883"/>
    </ligand>
</feature>
<feature type="binding site" evidence="1">
    <location>
        <position position="226"/>
    </location>
    <ligand>
        <name>(2E)-4-hydroxy-3-methylbut-2-enyl diphosphate</name>
        <dbReference type="ChEBI" id="CHEBI:128753"/>
    </ligand>
</feature>
<feature type="binding site" evidence="1">
    <location>
        <position position="226"/>
    </location>
    <ligand>
        <name>dimethylallyl diphosphate</name>
        <dbReference type="ChEBI" id="CHEBI:57623"/>
    </ligand>
</feature>
<feature type="binding site" evidence="1">
    <location>
        <position position="226"/>
    </location>
    <ligand>
        <name>isopentenyl diphosphate</name>
        <dbReference type="ChEBI" id="CHEBI:128769"/>
    </ligand>
</feature>
<feature type="binding site" evidence="1">
    <location>
        <position position="228"/>
    </location>
    <ligand>
        <name>(2E)-4-hydroxy-3-methylbut-2-enyl diphosphate</name>
        <dbReference type="ChEBI" id="CHEBI:128753"/>
    </ligand>
</feature>
<feature type="binding site" evidence="1">
    <location>
        <position position="228"/>
    </location>
    <ligand>
        <name>dimethylallyl diphosphate</name>
        <dbReference type="ChEBI" id="CHEBI:57623"/>
    </ligand>
</feature>
<feature type="binding site" evidence="1">
    <location>
        <position position="228"/>
    </location>
    <ligand>
        <name>isopentenyl diphosphate</name>
        <dbReference type="ChEBI" id="CHEBI:128769"/>
    </ligand>
</feature>
<feature type="binding site" evidence="1">
    <location>
        <position position="271"/>
    </location>
    <ligand>
        <name>(2E)-4-hydroxy-3-methylbut-2-enyl diphosphate</name>
        <dbReference type="ChEBI" id="CHEBI:128753"/>
    </ligand>
</feature>
<feature type="binding site" evidence="1">
    <location>
        <position position="271"/>
    </location>
    <ligand>
        <name>dimethylallyl diphosphate</name>
        <dbReference type="ChEBI" id="CHEBI:57623"/>
    </ligand>
</feature>
<feature type="binding site" evidence="1">
    <location>
        <position position="271"/>
    </location>
    <ligand>
        <name>isopentenyl diphosphate</name>
        <dbReference type="ChEBI" id="CHEBI:128769"/>
    </ligand>
</feature>
<proteinExistence type="inferred from homology"/>
<dbReference type="EC" id="1.17.7.4" evidence="1"/>
<dbReference type="EMBL" id="CP000813">
    <property type="protein sequence ID" value="ABV62918.1"/>
    <property type="molecule type" value="Genomic_DNA"/>
</dbReference>
<dbReference type="RefSeq" id="WP_012010603.1">
    <property type="nucleotide sequence ID" value="NZ_VEIS01000005.1"/>
</dbReference>
<dbReference type="SMR" id="A8FFA1"/>
<dbReference type="STRING" id="315750.BPUM_2249"/>
<dbReference type="GeneID" id="5621515"/>
<dbReference type="KEGG" id="bpu:BPUM_2249"/>
<dbReference type="eggNOG" id="COG0761">
    <property type="taxonomic scope" value="Bacteria"/>
</dbReference>
<dbReference type="HOGENOM" id="CLU_027486_0_0_9"/>
<dbReference type="OrthoDB" id="9777362at2"/>
<dbReference type="UniPathway" id="UPA00056">
    <property type="reaction ID" value="UER00097"/>
</dbReference>
<dbReference type="UniPathway" id="UPA00059">
    <property type="reaction ID" value="UER00105"/>
</dbReference>
<dbReference type="Proteomes" id="UP000001355">
    <property type="component" value="Chromosome"/>
</dbReference>
<dbReference type="GO" id="GO:0051539">
    <property type="term" value="F:4 iron, 4 sulfur cluster binding"/>
    <property type="evidence" value="ECO:0007669"/>
    <property type="project" value="UniProtKB-UniRule"/>
</dbReference>
<dbReference type="GO" id="GO:0051745">
    <property type="term" value="F:4-hydroxy-3-methylbut-2-enyl diphosphate reductase activity"/>
    <property type="evidence" value="ECO:0007669"/>
    <property type="project" value="UniProtKB-UniRule"/>
</dbReference>
<dbReference type="GO" id="GO:0046872">
    <property type="term" value="F:metal ion binding"/>
    <property type="evidence" value="ECO:0007669"/>
    <property type="project" value="UniProtKB-KW"/>
</dbReference>
<dbReference type="GO" id="GO:0050992">
    <property type="term" value="P:dimethylallyl diphosphate biosynthetic process"/>
    <property type="evidence" value="ECO:0007669"/>
    <property type="project" value="UniProtKB-UniRule"/>
</dbReference>
<dbReference type="GO" id="GO:0019288">
    <property type="term" value="P:isopentenyl diphosphate biosynthetic process, methylerythritol 4-phosphate pathway"/>
    <property type="evidence" value="ECO:0007669"/>
    <property type="project" value="UniProtKB-UniRule"/>
</dbReference>
<dbReference type="GO" id="GO:0016114">
    <property type="term" value="P:terpenoid biosynthetic process"/>
    <property type="evidence" value="ECO:0007669"/>
    <property type="project" value="UniProtKB-UniRule"/>
</dbReference>
<dbReference type="CDD" id="cd13944">
    <property type="entry name" value="lytB_ispH"/>
    <property type="match status" value="1"/>
</dbReference>
<dbReference type="Gene3D" id="3.40.50.11270">
    <property type="match status" value="1"/>
</dbReference>
<dbReference type="Gene3D" id="3.40.1010.20">
    <property type="entry name" value="4-hydroxy-3-methylbut-2-enyl diphosphate reductase, catalytic domain"/>
    <property type="match status" value="2"/>
</dbReference>
<dbReference type="HAMAP" id="MF_00191">
    <property type="entry name" value="IspH"/>
    <property type="match status" value="1"/>
</dbReference>
<dbReference type="InterPro" id="IPR003451">
    <property type="entry name" value="LytB/IspH"/>
</dbReference>
<dbReference type="NCBIfam" id="TIGR00216">
    <property type="entry name" value="ispH_lytB"/>
    <property type="match status" value="1"/>
</dbReference>
<dbReference type="NCBIfam" id="NF002187">
    <property type="entry name" value="PRK01045.1-1"/>
    <property type="match status" value="1"/>
</dbReference>
<dbReference type="PANTHER" id="PTHR30426">
    <property type="entry name" value="4-HYDROXY-3-METHYLBUT-2-ENYL DIPHOSPHATE REDUCTASE"/>
    <property type="match status" value="1"/>
</dbReference>
<dbReference type="PANTHER" id="PTHR30426:SF0">
    <property type="entry name" value="4-HYDROXY-3-METHYLBUT-2-ENYL DIPHOSPHATE REDUCTASE"/>
    <property type="match status" value="1"/>
</dbReference>
<dbReference type="Pfam" id="PF02401">
    <property type="entry name" value="LYTB"/>
    <property type="match status" value="1"/>
</dbReference>
<evidence type="ECO:0000255" key="1">
    <source>
        <dbReference type="HAMAP-Rule" id="MF_00191"/>
    </source>
</evidence>
<sequence length="314" mass="34679">MNVIKISPRGYCYGVVDAMVIAKNAALDKNLPRPIYILGMIVHNKHVTDAFEEDGIYTLDGPNRLDILKQVESGTVIFTAHGVSPEVRQIAEEKGLVAIDATCPDVTKTHELISEKTADGYDIIYIGKKGHPEPEGAVGVAPDKVHLVESEADIEALDLTSDKLLITNQTTMSQWDVHDLMELIKEKYPHVEYHQEICLATQVRQEAVSEQAGQADLTIVVGDPKSNNSNRLAQVSMEIAGTQAYRIGDLSELKLEWLQGVNTVAITAGASTPTPITKEVIRFLENYEPDDESTWKIERSVPLSKILPRVKTKK</sequence>
<accession>A8FFA1</accession>
<comment type="function">
    <text evidence="1">Catalyzes the conversion of 1-hydroxy-2-methyl-2-(E)-butenyl 4-diphosphate (HMBPP) into a mixture of isopentenyl diphosphate (IPP) and dimethylallyl diphosphate (DMAPP). Acts in the terminal step of the DOXP/MEP pathway for isoprenoid precursor biosynthesis.</text>
</comment>
<comment type="catalytic activity">
    <reaction evidence="1">
        <text>isopentenyl diphosphate + 2 oxidized [2Fe-2S]-[ferredoxin] + H2O = (2E)-4-hydroxy-3-methylbut-2-enyl diphosphate + 2 reduced [2Fe-2S]-[ferredoxin] + 2 H(+)</text>
        <dbReference type="Rhea" id="RHEA:24488"/>
        <dbReference type="Rhea" id="RHEA-COMP:10000"/>
        <dbReference type="Rhea" id="RHEA-COMP:10001"/>
        <dbReference type="ChEBI" id="CHEBI:15377"/>
        <dbReference type="ChEBI" id="CHEBI:15378"/>
        <dbReference type="ChEBI" id="CHEBI:33737"/>
        <dbReference type="ChEBI" id="CHEBI:33738"/>
        <dbReference type="ChEBI" id="CHEBI:128753"/>
        <dbReference type="ChEBI" id="CHEBI:128769"/>
        <dbReference type="EC" id="1.17.7.4"/>
    </reaction>
</comment>
<comment type="catalytic activity">
    <reaction evidence="1">
        <text>dimethylallyl diphosphate + 2 oxidized [2Fe-2S]-[ferredoxin] + H2O = (2E)-4-hydroxy-3-methylbut-2-enyl diphosphate + 2 reduced [2Fe-2S]-[ferredoxin] + 2 H(+)</text>
        <dbReference type="Rhea" id="RHEA:24825"/>
        <dbReference type="Rhea" id="RHEA-COMP:10000"/>
        <dbReference type="Rhea" id="RHEA-COMP:10001"/>
        <dbReference type="ChEBI" id="CHEBI:15377"/>
        <dbReference type="ChEBI" id="CHEBI:15378"/>
        <dbReference type="ChEBI" id="CHEBI:33737"/>
        <dbReference type="ChEBI" id="CHEBI:33738"/>
        <dbReference type="ChEBI" id="CHEBI:57623"/>
        <dbReference type="ChEBI" id="CHEBI:128753"/>
        <dbReference type="EC" id="1.17.7.4"/>
    </reaction>
</comment>
<comment type="cofactor">
    <cofactor evidence="1">
        <name>[4Fe-4S] cluster</name>
        <dbReference type="ChEBI" id="CHEBI:49883"/>
    </cofactor>
    <text evidence="1">Binds 1 [4Fe-4S] cluster per subunit.</text>
</comment>
<comment type="pathway">
    <text evidence="1">Isoprenoid biosynthesis; dimethylallyl diphosphate biosynthesis; dimethylallyl diphosphate from (2E)-4-hydroxy-3-methylbutenyl diphosphate: step 1/1.</text>
</comment>
<comment type="pathway">
    <text evidence="1">Isoprenoid biosynthesis; isopentenyl diphosphate biosynthesis via DXP pathway; isopentenyl diphosphate from 1-deoxy-D-xylulose 5-phosphate: step 6/6.</text>
</comment>
<comment type="similarity">
    <text evidence="1">Belongs to the IspH family.</text>
</comment>
<name>ISPH_BACP2</name>
<keyword id="KW-0004">4Fe-4S</keyword>
<keyword id="KW-0408">Iron</keyword>
<keyword id="KW-0411">Iron-sulfur</keyword>
<keyword id="KW-0414">Isoprene biosynthesis</keyword>
<keyword id="KW-0479">Metal-binding</keyword>
<keyword id="KW-0560">Oxidoreductase</keyword>
<organism>
    <name type="scientific">Bacillus pumilus (strain SAFR-032)</name>
    <dbReference type="NCBI Taxonomy" id="315750"/>
    <lineage>
        <taxon>Bacteria</taxon>
        <taxon>Bacillati</taxon>
        <taxon>Bacillota</taxon>
        <taxon>Bacilli</taxon>
        <taxon>Bacillales</taxon>
        <taxon>Bacillaceae</taxon>
        <taxon>Bacillus</taxon>
    </lineage>
</organism>
<protein>
    <recommendedName>
        <fullName evidence="1">4-hydroxy-3-methylbut-2-enyl diphosphate reductase</fullName>
        <shortName evidence="1">HMBPP reductase</shortName>
        <ecNumber evidence="1">1.17.7.4</ecNumber>
    </recommendedName>
</protein>
<reference key="1">
    <citation type="journal article" date="2007" name="PLoS ONE">
        <title>Paradoxical DNA repair and peroxide resistance gene conservation in Bacillus pumilus SAFR-032.</title>
        <authorList>
            <person name="Gioia J."/>
            <person name="Yerrapragada S."/>
            <person name="Qin X."/>
            <person name="Jiang H."/>
            <person name="Igboeli O.C."/>
            <person name="Muzny D."/>
            <person name="Dugan-Rocha S."/>
            <person name="Ding Y."/>
            <person name="Hawes A."/>
            <person name="Liu W."/>
            <person name="Perez L."/>
            <person name="Kovar C."/>
            <person name="Dinh H."/>
            <person name="Lee S."/>
            <person name="Nazareth L."/>
            <person name="Blyth P."/>
            <person name="Holder M."/>
            <person name="Buhay C."/>
            <person name="Tirumalai M.R."/>
            <person name="Liu Y."/>
            <person name="Dasgupta I."/>
            <person name="Bokhetache L."/>
            <person name="Fujita M."/>
            <person name="Karouia F."/>
            <person name="Eswara Moorthy P."/>
            <person name="Siefert J."/>
            <person name="Uzman A."/>
            <person name="Buzumbo P."/>
            <person name="Verma A."/>
            <person name="Zwiya H."/>
            <person name="McWilliams B.D."/>
            <person name="Olowu A."/>
            <person name="Clinkenbeard K.D."/>
            <person name="Newcombe D."/>
            <person name="Golebiewski L."/>
            <person name="Petrosino J.F."/>
            <person name="Nicholson W.L."/>
            <person name="Fox G.E."/>
            <person name="Venkateswaran K."/>
            <person name="Highlander S.K."/>
            <person name="Weinstock G.M."/>
        </authorList>
    </citation>
    <scope>NUCLEOTIDE SEQUENCE [LARGE SCALE GENOMIC DNA]</scope>
    <source>
        <strain>SAFR-032</strain>
    </source>
</reference>
<gene>
    <name evidence="1" type="primary">ispH</name>
    <name type="ordered locus">BPUM_2249</name>
</gene>